<accession>B5FRL8</accession>
<proteinExistence type="inferred from homology"/>
<keyword id="KW-1003">Cell membrane</keyword>
<keyword id="KW-0210">Decarboxylase</keyword>
<keyword id="KW-0444">Lipid biosynthesis</keyword>
<keyword id="KW-0443">Lipid metabolism</keyword>
<keyword id="KW-0456">Lyase</keyword>
<keyword id="KW-0472">Membrane</keyword>
<keyword id="KW-0594">Phospholipid biosynthesis</keyword>
<keyword id="KW-1208">Phospholipid metabolism</keyword>
<keyword id="KW-0670">Pyruvate</keyword>
<keyword id="KW-0865">Zymogen</keyword>
<feature type="chain" id="PRO_1000131392" description="Phosphatidylserine decarboxylase beta chain" evidence="1">
    <location>
        <begin position="1"/>
        <end position="253"/>
    </location>
</feature>
<feature type="chain" id="PRO_1000131393" description="Phosphatidylserine decarboxylase alpha chain" evidence="1">
    <location>
        <begin position="254"/>
        <end position="322"/>
    </location>
</feature>
<feature type="region of interest" description="Disordered" evidence="2">
    <location>
        <begin position="296"/>
        <end position="322"/>
    </location>
</feature>
<feature type="compositionally biased region" description="Basic and acidic residues" evidence="2">
    <location>
        <begin position="303"/>
        <end position="322"/>
    </location>
</feature>
<feature type="active site" description="Charge relay system; for autoendoproteolytic cleavage activity" evidence="1">
    <location>
        <position position="90"/>
    </location>
</feature>
<feature type="active site" description="Charge relay system; for autoendoproteolytic cleavage activity" evidence="1">
    <location>
        <position position="147"/>
    </location>
</feature>
<feature type="active site" description="Charge relay system; for autoendoproteolytic cleavage activity" evidence="1">
    <location>
        <position position="254"/>
    </location>
</feature>
<feature type="active site" description="Schiff-base intermediate with substrate; via pyruvic acid; for decarboxylase activity" evidence="1">
    <location>
        <position position="254"/>
    </location>
</feature>
<feature type="site" description="Cleavage (non-hydrolytic); by autocatalysis" evidence="1">
    <location>
        <begin position="253"/>
        <end position="254"/>
    </location>
</feature>
<feature type="modified residue" description="Pyruvic acid (Ser); by autocatalysis" evidence="1">
    <location>
        <position position="254"/>
    </location>
</feature>
<gene>
    <name evidence="1" type="primary">psd</name>
    <name type="ordered locus">SeD_A4745</name>
</gene>
<organism>
    <name type="scientific">Salmonella dublin (strain CT_02021853)</name>
    <dbReference type="NCBI Taxonomy" id="439851"/>
    <lineage>
        <taxon>Bacteria</taxon>
        <taxon>Pseudomonadati</taxon>
        <taxon>Pseudomonadota</taxon>
        <taxon>Gammaproteobacteria</taxon>
        <taxon>Enterobacterales</taxon>
        <taxon>Enterobacteriaceae</taxon>
        <taxon>Salmonella</taxon>
    </lineage>
</organism>
<evidence type="ECO:0000255" key="1">
    <source>
        <dbReference type="HAMAP-Rule" id="MF_00662"/>
    </source>
</evidence>
<evidence type="ECO:0000256" key="2">
    <source>
        <dbReference type="SAM" id="MobiDB-lite"/>
    </source>
</evidence>
<dbReference type="EC" id="4.1.1.65" evidence="1"/>
<dbReference type="EMBL" id="CP001144">
    <property type="protein sequence ID" value="ACH75039.1"/>
    <property type="molecule type" value="Genomic_DNA"/>
</dbReference>
<dbReference type="SMR" id="B5FRL8"/>
<dbReference type="KEGG" id="sed:SeD_A4745"/>
<dbReference type="HOGENOM" id="CLU_029061_4_1_6"/>
<dbReference type="UniPathway" id="UPA00558">
    <property type="reaction ID" value="UER00616"/>
</dbReference>
<dbReference type="Proteomes" id="UP000008322">
    <property type="component" value="Chromosome"/>
</dbReference>
<dbReference type="GO" id="GO:0005886">
    <property type="term" value="C:plasma membrane"/>
    <property type="evidence" value="ECO:0007669"/>
    <property type="project" value="UniProtKB-SubCell"/>
</dbReference>
<dbReference type="GO" id="GO:0004609">
    <property type="term" value="F:phosphatidylserine decarboxylase activity"/>
    <property type="evidence" value="ECO:0007669"/>
    <property type="project" value="UniProtKB-UniRule"/>
</dbReference>
<dbReference type="GO" id="GO:0006646">
    <property type="term" value="P:phosphatidylethanolamine biosynthetic process"/>
    <property type="evidence" value="ECO:0007669"/>
    <property type="project" value="UniProtKB-UniRule"/>
</dbReference>
<dbReference type="HAMAP" id="MF_00662">
    <property type="entry name" value="PS_decarb_PSD_B_type1"/>
    <property type="match status" value="1"/>
</dbReference>
<dbReference type="InterPro" id="IPR003817">
    <property type="entry name" value="PS_Dcarbxylase"/>
</dbReference>
<dbReference type="InterPro" id="IPR033177">
    <property type="entry name" value="PSD-B"/>
</dbReference>
<dbReference type="InterPro" id="IPR033178">
    <property type="entry name" value="PSD_type1_pro"/>
</dbReference>
<dbReference type="NCBIfam" id="TIGR00163">
    <property type="entry name" value="PS_decarb"/>
    <property type="match status" value="1"/>
</dbReference>
<dbReference type="PANTHER" id="PTHR10067">
    <property type="entry name" value="PHOSPHATIDYLSERINE DECARBOXYLASE"/>
    <property type="match status" value="1"/>
</dbReference>
<dbReference type="PANTHER" id="PTHR10067:SF6">
    <property type="entry name" value="PHOSPHATIDYLSERINE DECARBOXYLASE PROENZYME, MITOCHONDRIAL"/>
    <property type="match status" value="1"/>
</dbReference>
<dbReference type="Pfam" id="PF02666">
    <property type="entry name" value="PS_Dcarbxylase"/>
    <property type="match status" value="1"/>
</dbReference>
<reference key="1">
    <citation type="journal article" date="2011" name="J. Bacteriol.">
        <title>Comparative genomics of 28 Salmonella enterica isolates: evidence for CRISPR-mediated adaptive sublineage evolution.</title>
        <authorList>
            <person name="Fricke W.F."/>
            <person name="Mammel M.K."/>
            <person name="McDermott P.F."/>
            <person name="Tartera C."/>
            <person name="White D.G."/>
            <person name="Leclerc J.E."/>
            <person name="Ravel J."/>
            <person name="Cebula T.A."/>
        </authorList>
    </citation>
    <scope>NUCLEOTIDE SEQUENCE [LARGE SCALE GENOMIC DNA]</scope>
    <source>
        <strain>CT_02021853</strain>
    </source>
</reference>
<sequence>MLNSFKLSLQYILPKLWLTRLAGWGASKRAGWLTKLVIDLFVKYYKVDMTEAQKPDTASYRTFNDFFVRPLRDDVRPLNTDPNILVMPADGVISQLGRIEEDKILQAKGHNYSLEALLAGNYLMADKFRNGTFVTTYLSPRDYHRVHMPCNGILREMIYVPGDLFSVNHLTAQNVPNLFARNERVICLFDTEFGPMAQILVGATIVGSIETVWAGTITPPREGIIKRWTWPEGEHEGSVALLKGQEMGRFKLGSTVINLFAPGKVNLIASLASLSVTKIGQPLATSTETFVAPEVEPAPLPAEEIKAEHDASPLVDNKKDDT</sequence>
<protein>
    <recommendedName>
        <fullName evidence="1">Phosphatidylserine decarboxylase proenzyme</fullName>
        <ecNumber evidence="1">4.1.1.65</ecNumber>
    </recommendedName>
    <component>
        <recommendedName>
            <fullName evidence="1">Phosphatidylserine decarboxylase alpha chain</fullName>
        </recommendedName>
    </component>
    <component>
        <recommendedName>
            <fullName evidence="1">Phosphatidylserine decarboxylase beta chain</fullName>
        </recommendedName>
    </component>
</protein>
<comment type="function">
    <text evidence="1">Catalyzes the formation of phosphatidylethanolamine (PtdEtn) from phosphatidylserine (PtdSer).</text>
</comment>
<comment type="catalytic activity">
    <reaction evidence="1">
        <text>a 1,2-diacyl-sn-glycero-3-phospho-L-serine + H(+) = a 1,2-diacyl-sn-glycero-3-phosphoethanolamine + CO2</text>
        <dbReference type="Rhea" id="RHEA:20828"/>
        <dbReference type="ChEBI" id="CHEBI:15378"/>
        <dbReference type="ChEBI" id="CHEBI:16526"/>
        <dbReference type="ChEBI" id="CHEBI:57262"/>
        <dbReference type="ChEBI" id="CHEBI:64612"/>
        <dbReference type="EC" id="4.1.1.65"/>
    </reaction>
</comment>
<comment type="cofactor">
    <cofactor evidence="1">
        <name>pyruvate</name>
        <dbReference type="ChEBI" id="CHEBI:15361"/>
    </cofactor>
    <text evidence="1">Binds 1 pyruvoyl group covalently per subunit.</text>
</comment>
<comment type="pathway">
    <text evidence="1">Phospholipid metabolism; phosphatidylethanolamine biosynthesis; phosphatidylethanolamine from CDP-diacylglycerol: step 2/2.</text>
</comment>
<comment type="subunit">
    <text evidence="1">Heterodimer of a large membrane-associated beta subunit and a small pyruvoyl-containing alpha subunit.</text>
</comment>
<comment type="subcellular location">
    <subcellularLocation>
        <location evidence="1">Cell membrane</location>
        <topology evidence="1">Peripheral membrane protein</topology>
    </subcellularLocation>
</comment>
<comment type="PTM">
    <text evidence="1">Is synthesized initially as an inactive proenzyme. Formation of the active enzyme involves a self-maturation process in which the active site pyruvoyl group is generated from an internal serine residue via an autocatalytic post-translational modification. Two non-identical subunits are generated from the proenzyme in this reaction, and the pyruvate is formed at the N-terminus of the alpha chain, which is derived from the carboxyl end of the proenzyme. The autoendoproteolytic cleavage occurs by a canonical serine protease mechanism, in which the side chain hydroxyl group of the serine supplies its oxygen atom to form the C-terminus of the beta chain, while the remainder of the serine residue undergoes an oxidative deamination to produce ammonia and the pyruvoyl prosthetic group on the alpha chain. During this reaction, the Ser that is part of the protease active site of the proenzyme becomes the pyruvoyl prosthetic group, which constitutes an essential element of the active site of the mature decarboxylase.</text>
</comment>
<comment type="similarity">
    <text evidence="1">Belongs to the phosphatidylserine decarboxylase family. PSD-B subfamily. Prokaryotic type I sub-subfamily.</text>
</comment>
<name>PSD_SALDC</name>